<protein>
    <recommendedName>
        <fullName>ADP-ribose pyrophosphatase</fullName>
        <ecNumber>3.6.1.13</ecNumber>
    </recommendedName>
    <alternativeName>
        <fullName>ADP-ribose diphosphatase</fullName>
    </alternativeName>
    <alternativeName>
        <fullName>ADP-ribose phosphohydrolase</fullName>
        <shortName>ASPPase</shortName>
    </alternativeName>
    <alternativeName>
        <fullName>Adenosine diphosphoribose pyrophosphatase</fullName>
        <shortName>ADPR-PPase</shortName>
    </alternativeName>
</protein>
<organism>
    <name type="scientific">Escherichia coli O6:H1 (strain CFT073 / ATCC 700928 / UPEC)</name>
    <dbReference type="NCBI Taxonomy" id="199310"/>
    <lineage>
        <taxon>Bacteria</taxon>
        <taxon>Pseudomonadati</taxon>
        <taxon>Pseudomonadota</taxon>
        <taxon>Gammaproteobacteria</taxon>
        <taxon>Enterobacterales</taxon>
        <taxon>Enterobacteriaceae</taxon>
        <taxon>Escherichia</taxon>
    </lineage>
</organism>
<feature type="chain" id="PRO_0000057043" description="ADP-ribose pyrophosphatase">
    <location>
        <begin position="1"/>
        <end position="209"/>
    </location>
</feature>
<feature type="domain" description="Nudix hydrolase" evidence="2">
    <location>
        <begin position="55"/>
        <end position="193"/>
    </location>
</feature>
<feature type="short sequence motif" description="Nudix box">
    <location>
        <begin position="97"/>
        <end position="118"/>
    </location>
</feature>
<feature type="active site" description="Proton acceptor" evidence="1">
    <location>
        <position position="162"/>
    </location>
</feature>
<feature type="binding site" description="in other chain" evidence="1">
    <location>
        <begin position="28"/>
        <end position="29"/>
    </location>
    <ligand>
        <name>substrate</name>
        <note>ligand shared between dimeric partners</note>
    </ligand>
</feature>
<feature type="binding site" evidence="1">
    <location>
        <begin position="51"/>
        <end position="52"/>
    </location>
    <ligand>
        <name>substrate</name>
        <note>ligand shared between dimeric partners</note>
    </ligand>
</feature>
<feature type="binding site" description="in other chain" evidence="1">
    <location>
        <position position="56"/>
    </location>
    <ligand>
        <name>substrate</name>
        <note>ligand shared between dimeric partners</note>
    </ligand>
</feature>
<feature type="binding site" description="in other chain" evidence="1">
    <location>
        <position position="79"/>
    </location>
    <ligand>
        <name>substrate</name>
        <note>ligand shared between dimeric partners</note>
    </ligand>
</feature>
<feature type="binding site" evidence="1">
    <location>
        <position position="96"/>
    </location>
    <ligand>
        <name>Mg(2+)</name>
        <dbReference type="ChEBI" id="CHEBI:18420"/>
        <label>1</label>
    </ligand>
</feature>
<feature type="binding site" description="in other chain" evidence="1">
    <location>
        <position position="98"/>
    </location>
    <ligand>
        <name>substrate</name>
        <note>ligand shared between dimeric partners</note>
    </ligand>
</feature>
<feature type="binding site" evidence="1">
    <location>
        <position position="112"/>
    </location>
    <ligand>
        <name>Mg(2+)</name>
        <dbReference type="ChEBI" id="CHEBI:18420"/>
        <label>2</label>
    </ligand>
</feature>
<feature type="binding site" evidence="1">
    <location>
        <position position="112"/>
    </location>
    <ligand>
        <name>Mg(2+)</name>
        <dbReference type="ChEBI" id="CHEBI:18420"/>
        <label>3</label>
    </ligand>
</feature>
<feature type="binding site" evidence="1">
    <location>
        <position position="116"/>
    </location>
    <ligand>
        <name>Mg(2+)</name>
        <dbReference type="ChEBI" id="CHEBI:18420"/>
        <label>1</label>
    </ligand>
</feature>
<feature type="binding site" evidence="1">
    <location>
        <position position="116"/>
    </location>
    <ligand>
        <name>Mg(2+)</name>
        <dbReference type="ChEBI" id="CHEBI:18420"/>
        <label>3</label>
    </ligand>
</feature>
<feature type="binding site" evidence="1">
    <location>
        <begin position="133"/>
        <end position="135"/>
    </location>
    <ligand>
        <name>substrate</name>
        <note>ligand shared between dimeric partners</note>
    </ligand>
</feature>
<feature type="binding site" description="in other chain" evidence="1">
    <location>
        <position position="139"/>
    </location>
    <ligand>
        <name>substrate</name>
        <note>ligand shared between dimeric partners</note>
    </ligand>
</feature>
<feature type="binding site" evidence="1">
    <location>
        <position position="164"/>
    </location>
    <ligand>
        <name>Mg(2+)</name>
        <dbReference type="ChEBI" id="CHEBI:18420"/>
        <label>3</label>
    </ligand>
</feature>
<name>ADPP_ECOL6</name>
<proteinExistence type="inferred from homology"/>
<keyword id="KW-0378">Hydrolase</keyword>
<keyword id="KW-0460">Magnesium</keyword>
<keyword id="KW-0464">Manganese</keyword>
<keyword id="KW-0479">Metal-binding</keyword>
<keyword id="KW-1185">Reference proteome</keyword>
<reference key="1">
    <citation type="journal article" date="2002" name="Proc. Natl. Acad. Sci. U.S.A.">
        <title>Extensive mosaic structure revealed by the complete genome sequence of uropathogenic Escherichia coli.</title>
        <authorList>
            <person name="Welch R.A."/>
            <person name="Burland V."/>
            <person name="Plunkett G. III"/>
            <person name="Redford P."/>
            <person name="Roesch P."/>
            <person name="Rasko D."/>
            <person name="Buckles E.L."/>
            <person name="Liou S.-R."/>
            <person name="Boutin A."/>
            <person name="Hackett J."/>
            <person name="Stroud D."/>
            <person name="Mayhew G.F."/>
            <person name="Rose D.J."/>
            <person name="Zhou S."/>
            <person name="Schwartz D.C."/>
            <person name="Perna N.T."/>
            <person name="Mobley H.L.T."/>
            <person name="Donnenberg M.S."/>
            <person name="Blattner F.R."/>
        </authorList>
    </citation>
    <scope>NUCLEOTIDE SEQUENCE [LARGE SCALE GENOMIC DNA]</scope>
    <source>
        <strain>CFT073 / ATCC 700928 / UPEC</strain>
    </source>
</reference>
<comment type="function">
    <text evidence="1">Acts on ADP-mannose and ADP-glucose as well as ADP-ribose. Prevents glycogen biosynthesis. The reaction catalyzed by this enzyme is a limiting step of the gluconeogenic process (By similarity).</text>
</comment>
<comment type="catalytic activity">
    <reaction>
        <text>ADP-D-ribose + H2O = D-ribose 5-phosphate + AMP + 2 H(+)</text>
        <dbReference type="Rhea" id="RHEA:10412"/>
        <dbReference type="ChEBI" id="CHEBI:15377"/>
        <dbReference type="ChEBI" id="CHEBI:15378"/>
        <dbReference type="ChEBI" id="CHEBI:57967"/>
        <dbReference type="ChEBI" id="CHEBI:78346"/>
        <dbReference type="ChEBI" id="CHEBI:456215"/>
        <dbReference type="EC" id="3.6.1.13"/>
    </reaction>
</comment>
<comment type="cofactor">
    <cofactor evidence="1">
        <name>Mg(2+)</name>
        <dbReference type="ChEBI" id="CHEBI:18420"/>
    </cofactor>
    <text evidence="1">Binds 3 Mg(2+) ions per subunit.</text>
</comment>
<comment type="activity regulation">
    <text evidence="1">Inhibited by phosphorylated compounds such as AMP, ADP, ATP, 3-phosphoglyceric acid and PPi. Not inhibited by orthophosphate. Activity is high in cells grown in low glucose concentrations and decreases dramatically as glucose concentration increases (By similarity).</text>
</comment>
<comment type="subunit">
    <text evidence="1">Homodimer.</text>
</comment>
<comment type="similarity">
    <text evidence="3">Belongs to the Nudix hydrolase family. NudF subfamily.</text>
</comment>
<accession>P83842</accession>
<accession>P36651</accession>
<evidence type="ECO:0000250" key="1"/>
<evidence type="ECO:0000255" key="2">
    <source>
        <dbReference type="PROSITE-ProRule" id="PRU00794"/>
    </source>
</evidence>
<evidence type="ECO:0000305" key="3"/>
<dbReference type="EC" id="3.6.1.13"/>
<dbReference type="EMBL" id="AE014075">
    <property type="protein sequence ID" value="AAN82224.1"/>
    <property type="molecule type" value="Genomic_DNA"/>
</dbReference>
<dbReference type="RefSeq" id="WP_000917117.1">
    <property type="nucleotide sequence ID" value="NZ_CP051263.1"/>
</dbReference>
<dbReference type="SMR" id="P83842"/>
<dbReference type="STRING" id="199310.c3780"/>
<dbReference type="GeneID" id="93778959"/>
<dbReference type="KEGG" id="ecc:c3780"/>
<dbReference type="eggNOG" id="COG0494">
    <property type="taxonomic scope" value="Bacteria"/>
</dbReference>
<dbReference type="HOGENOM" id="CLU_062658_6_1_6"/>
<dbReference type="BioCyc" id="ECOL199310:C3780-MONOMER"/>
<dbReference type="Proteomes" id="UP000001410">
    <property type="component" value="Chromosome"/>
</dbReference>
<dbReference type="GO" id="GO:0005829">
    <property type="term" value="C:cytosol"/>
    <property type="evidence" value="ECO:0007669"/>
    <property type="project" value="TreeGrafter"/>
</dbReference>
<dbReference type="GO" id="GO:0047631">
    <property type="term" value="F:ADP-ribose diphosphatase activity"/>
    <property type="evidence" value="ECO:0007669"/>
    <property type="project" value="UniProtKB-EC"/>
</dbReference>
<dbReference type="GO" id="GO:0019144">
    <property type="term" value="F:ADP-sugar diphosphatase activity"/>
    <property type="evidence" value="ECO:0007669"/>
    <property type="project" value="TreeGrafter"/>
</dbReference>
<dbReference type="GO" id="GO:0046872">
    <property type="term" value="F:metal ion binding"/>
    <property type="evidence" value="ECO:0007669"/>
    <property type="project" value="UniProtKB-KW"/>
</dbReference>
<dbReference type="GO" id="GO:0006753">
    <property type="term" value="P:nucleoside phosphate metabolic process"/>
    <property type="evidence" value="ECO:0007669"/>
    <property type="project" value="TreeGrafter"/>
</dbReference>
<dbReference type="GO" id="GO:0019693">
    <property type="term" value="P:ribose phosphate metabolic process"/>
    <property type="evidence" value="ECO:0007669"/>
    <property type="project" value="TreeGrafter"/>
</dbReference>
<dbReference type="CDD" id="cd24155">
    <property type="entry name" value="NUDIX_ADPRase"/>
    <property type="match status" value="1"/>
</dbReference>
<dbReference type="FunFam" id="3.90.79.10:FF:000011">
    <property type="entry name" value="ADP-ribose pyrophosphatase"/>
    <property type="match status" value="1"/>
</dbReference>
<dbReference type="Gene3D" id="3.90.79.10">
    <property type="entry name" value="Nucleoside Triphosphate Pyrophosphohydrolase"/>
    <property type="match status" value="1"/>
</dbReference>
<dbReference type="InterPro" id="IPR004385">
    <property type="entry name" value="NDP_pyrophosphatase"/>
</dbReference>
<dbReference type="InterPro" id="IPR015797">
    <property type="entry name" value="NUDIX_hydrolase-like_dom_sf"/>
</dbReference>
<dbReference type="InterPro" id="IPR020084">
    <property type="entry name" value="NUDIX_hydrolase_CS"/>
</dbReference>
<dbReference type="InterPro" id="IPR000086">
    <property type="entry name" value="NUDIX_hydrolase_dom"/>
</dbReference>
<dbReference type="NCBIfam" id="TIGR00052">
    <property type="entry name" value="nudix-type nucleoside diphosphatase, YffH/AdpP family"/>
    <property type="match status" value="1"/>
</dbReference>
<dbReference type="NCBIfam" id="NF008003">
    <property type="entry name" value="PRK10729.1"/>
    <property type="match status" value="1"/>
</dbReference>
<dbReference type="PANTHER" id="PTHR11839:SF5">
    <property type="entry name" value="ADP-RIBOSE PYROPHOSPHATASE"/>
    <property type="match status" value="1"/>
</dbReference>
<dbReference type="PANTHER" id="PTHR11839">
    <property type="entry name" value="UDP/ADP-SUGAR PYROPHOSPHATASE"/>
    <property type="match status" value="1"/>
</dbReference>
<dbReference type="Pfam" id="PF00293">
    <property type="entry name" value="NUDIX"/>
    <property type="match status" value="1"/>
</dbReference>
<dbReference type="SUPFAM" id="SSF55811">
    <property type="entry name" value="Nudix"/>
    <property type="match status" value="1"/>
</dbReference>
<dbReference type="PROSITE" id="PS51462">
    <property type="entry name" value="NUDIX"/>
    <property type="match status" value="1"/>
</dbReference>
<dbReference type="PROSITE" id="PS00893">
    <property type="entry name" value="NUDIX_BOX"/>
    <property type="match status" value="1"/>
</dbReference>
<sequence length="209" mass="23667">MLKPDNLPVTFGKNDVEIIARETLYRGFFSLDLYRFRHRLFNGQMSHEVRREIFERGHAAVLLPFDPVRDEVVLIEQIRIAAYDTSETPWLLEMVAGMIEEGESVEDVARREAIEEAGLIVKRTKPVLSFLASPGGTSERSSIMVGEVDATTASGIHGLADENEDIRVHVVSREQAYQWVEEGKIDNAASVIALQWLQLHHQALKNEWA</sequence>
<gene>
    <name type="primary">nudF</name>
    <name type="synonym">aspP</name>
    <name type="ordered locus">c3780</name>
</gene>